<gene>
    <name evidence="1" type="primary">dnaA</name>
    <name type="ordered locus">TWT_001</name>
</gene>
<proteinExistence type="inferred from homology"/>
<keyword id="KW-0067">ATP-binding</keyword>
<keyword id="KW-0963">Cytoplasm</keyword>
<keyword id="KW-0235">DNA replication</keyword>
<keyword id="KW-0238">DNA-binding</keyword>
<keyword id="KW-0446">Lipid-binding</keyword>
<keyword id="KW-0547">Nucleotide-binding</keyword>
<keyword id="KW-1185">Reference proteome</keyword>
<reference key="1">
    <citation type="journal article" date="2003" name="Genome Res.">
        <title>Tropheryma whipplei twist: a human pathogenic Actinobacteria with a reduced genome.</title>
        <authorList>
            <person name="Raoult D."/>
            <person name="Ogata H."/>
            <person name="Audic S."/>
            <person name="Robert C."/>
            <person name="Suhre K."/>
            <person name="Drancourt M."/>
            <person name="Claverie J.-M."/>
        </authorList>
    </citation>
    <scope>NUCLEOTIDE SEQUENCE [LARGE SCALE GENOMIC DNA]</scope>
    <source>
        <strain>Twist</strain>
    </source>
</reference>
<evidence type="ECO:0000255" key="1">
    <source>
        <dbReference type="HAMAP-Rule" id="MF_00377"/>
    </source>
</evidence>
<accession>Q83N52</accession>
<sequence>MNKTLNPQEVWIKAVRNLEGFFSSPRVIGYLKKASPSIEGESLIITFPNSHLASVMDDIEVYDATKKTILDSYPSIKEIKITISPDVLEKEITEEINDLVQSMEEEDFALIDHTKPVIPNFFDQNTRVNFGGGPNNHHPTTGVNPRFTFDNFVVGKSNELARAASISAAERPGKSFNPLFIYGDSGVGKTHLLHSIGNYAKFLFPSLRIKYVSSEDFTNDFINSISSGTSQKFQEKYRQIDILMVDDIQFLQKKQETQESFFHTFNSLHNSSRQLVISSDLPPKQLMGFEDRMRSRFECGLVCDIQKPDLETRIAILQKKCQNEKKEVSMEILTYIASCFSSSVRELEGALLRIFALASFNKEEINMTLAQKVLEDLGAQRGDKIDPIEIIEITAKHYDLAASDLCGNSRVANISIARQIAMYLCRELTDVSLPKLGYIFGRDHSTIIYATRRISDLIGKDRKTFSDIYKLTQFILRR</sequence>
<comment type="function">
    <text evidence="1">Plays an essential role in the initiation and regulation of chromosomal replication. ATP-DnaA binds to the origin of replication (oriC) to initiate formation of the DNA replication initiation complex once per cell cycle. Binds the DnaA box (a 9 base pair repeat at the origin) and separates the double-stranded (ds)DNA. Forms a right-handed helical filament on oriC DNA; dsDNA binds to the exterior of the filament while single-stranded (ss)DNA is stabiized in the filament's interior. The ATP-DnaA-oriC complex binds and stabilizes one strand of the AT-rich DNA unwinding element (DUE), permitting loading of DNA polymerase. After initiation quickly degrades to an ADP-DnaA complex that is not apt for DNA replication. Binds acidic phospholipids.</text>
</comment>
<comment type="subunit">
    <text evidence="1">Oligomerizes as a right-handed, spiral filament on DNA at oriC.</text>
</comment>
<comment type="subcellular location">
    <subcellularLocation>
        <location evidence="1">Cytoplasm</location>
    </subcellularLocation>
</comment>
<comment type="domain">
    <text evidence="1">Domain I is involved in oligomerization and binding regulators, domain II is flexibile and of varying length in different bacteria, domain III forms the AAA+ region, while domain IV binds dsDNA.</text>
</comment>
<comment type="similarity">
    <text evidence="1">Belongs to the DnaA family.</text>
</comment>
<dbReference type="EMBL" id="AE014184">
    <property type="protein sequence ID" value="AAO44098.1"/>
    <property type="molecule type" value="Genomic_DNA"/>
</dbReference>
<dbReference type="RefSeq" id="WP_011095974.1">
    <property type="nucleotide sequence ID" value="NC_004572.3"/>
</dbReference>
<dbReference type="SMR" id="Q83N52"/>
<dbReference type="STRING" id="203267.TWT_001"/>
<dbReference type="GeneID" id="67387779"/>
<dbReference type="KEGG" id="twh:TWT_001"/>
<dbReference type="eggNOG" id="COG0593">
    <property type="taxonomic scope" value="Bacteria"/>
</dbReference>
<dbReference type="HOGENOM" id="CLU_026910_3_1_11"/>
<dbReference type="OrthoDB" id="9807019at2"/>
<dbReference type="Proteomes" id="UP000002200">
    <property type="component" value="Chromosome"/>
</dbReference>
<dbReference type="GO" id="GO:0005737">
    <property type="term" value="C:cytoplasm"/>
    <property type="evidence" value="ECO:0007669"/>
    <property type="project" value="UniProtKB-SubCell"/>
</dbReference>
<dbReference type="GO" id="GO:0005886">
    <property type="term" value="C:plasma membrane"/>
    <property type="evidence" value="ECO:0007669"/>
    <property type="project" value="TreeGrafter"/>
</dbReference>
<dbReference type="GO" id="GO:0005524">
    <property type="term" value="F:ATP binding"/>
    <property type="evidence" value="ECO:0007669"/>
    <property type="project" value="UniProtKB-UniRule"/>
</dbReference>
<dbReference type="GO" id="GO:0016887">
    <property type="term" value="F:ATP hydrolysis activity"/>
    <property type="evidence" value="ECO:0007669"/>
    <property type="project" value="InterPro"/>
</dbReference>
<dbReference type="GO" id="GO:0003688">
    <property type="term" value="F:DNA replication origin binding"/>
    <property type="evidence" value="ECO:0007669"/>
    <property type="project" value="UniProtKB-UniRule"/>
</dbReference>
<dbReference type="GO" id="GO:0008289">
    <property type="term" value="F:lipid binding"/>
    <property type="evidence" value="ECO:0007669"/>
    <property type="project" value="UniProtKB-KW"/>
</dbReference>
<dbReference type="GO" id="GO:0006270">
    <property type="term" value="P:DNA replication initiation"/>
    <property type="evidence" value="ECO:0007669"/>
    <property type="project" value="UniProtKB-UniRule"/>
</dbReference>
<dbReference type="GO" id="GO:0006275">
    <property type="term" value="P:regulation of DNA replication"/>
    <property type="evidence" value="ECO:0007669"/>
    <property type="project" value="UniProtKB-UniRule"/>
</dbReference>
<dbReference type="CDD" id="cd00009">
    <property type="entry name" value="AAA"/>
    <property type="match status" value="1"/>
</dbReference>
<dbReference type="CDD" id="cd06571">
    <property type="entry name" value="Bac_DnaA_C"/>
    <property type="match status" value="1"/>
</dbReference>
<dbReference type="FunFam" id="3.40.50.300:FF:000668">
    <property type="entry name" value="Chromosomal replication initiator protein DnaA"/>
    <property type="match status" value="1"/>
</dbReference>
<dbReference type="Gene3D" id="1.10.1750.10">
    <property type="match status" value="1"/>
</dbReference>
<dbReference type="Gene3D" id="1.10.8.60">
    <property type="match status" value="1"/>
</dbReference>
<dbReference type="Gene3D" id="3.40.50.300">
    <property type="entry name" value="P-loop containing nucleotide triphosphate hydrolases"/>
    <property type="match status" value="1"/>
</dbReference>
<dbReference type="HAMAP" id="MF_00377">
    <property type="entry name" value="DnaA_bact"/>
    <property type="match status" value="1"/>
</dbReference>
<dbReference type="InterPro" id="IPR003593">
    <property type="entry name" value="AAA+_ATPase"/>
</dbReference>
<dbReference type="InterPro" id="IPR001957">
    <property type="entry name" value="Chromosome_initiator_DnaA"/>
</dbReference>
<dbReference type="InterPro" id="IPR020591">
    <property type="entry name" value="Chromosome_initiator_DnaA-like"/>
</dbReference>
<dbReference type="InterPro" id="IPR018312">
    <property type="entry name" value="Chromosome_initiator_DnaA_CS"/>
</dbReference>
<dbReference type="InterPro" id="IPR013159">
    <property type="entry name" value="DnaA_C"/>
</dbReference>
<dbReference type="InterPro" id="IPR013317">
    <property type="entry name" value="DnaA_dom"/>
</dbReference>
<dbReference type="InterPro" id="IPR027417">
    <property type="entry name" value="P-loop_NTPase"/>
</dbReference>
<dbReference type="InterPro" id="IPR010921">
    <property type="entry name" value="Trp_repressor/repl_initiator"/>
</dbReference>
<dbReference type="NCBIfam" id="TIGR00362">
    <property type="entry name" value="DnaA"/>
    <property type="match status" value="1"/>
</dbReference>
<dbReference type="PANTHER" id="PTHR30050">
    <property type="entry name" value="CHROMOSOMAL REPLICATION INITIATOR PROTEIN DNAA"/>
    <property type="match status" value="1"/>
</dbReference>
<dbReference type="PANTHER" id="PTHR30050:SF2">
    <property type="entry name" value="CHROMOSOMAL REPLICATION INITIATOR PROTEIN DNAA"/>
    <property type="match status" value="1"/>
</dbReference>
<dbReference type="Pfam" id="PF00308">
    <property type="entry name" value="Bac_DnaA"/>
    <property type="match status" value="1"/>
</dbReference>
<dbReference type="Pfam" id="PF08299">
    <property type="entry name" value="Bac_DnaA_C"/>
    <property type="match status" value="1"/>
</dbReference>
<dbReference type="PRINTS" id="PR00051">
    <property type="entry name" value="DNAA"/>
</dbReference>
<dbReference type="SMART" id="SM00382">
    <property type="entry name" value="AAA"/>
    <property type="match status" value="1"/>
</dbReference>
<dbReference type="SMART" id="SM00760">
    <property type="entry name" value="Bac_DnaA_C"/>
    <property type="match status" value="1"/>
</dbReference>
<dbReference type="SUPFAM" id="SSF52540">
    <property type="entry name" value="P-loop containing nucleoside triphosphate hydrolases"/>
    <property type="match status" value="1"/>
</dbReference>
<dbReference type="SUPFAM" id="SSF48295">
    <property type="entry name" value="TrpR-like"/>
    <property type="match status" value="1"/>
</dbReference>
<dbReference type="PROSITE" id="PS01008">
    <property type="entry name" value="DNAA"/>
    <property type="match status" value="1"/>
</dbReference>
<feature type="chain" id="PRO_0000114293" description="Chromosomal replication initiator protein DnaA">
    <location>
        <begin position="1"/>
        <end position="478"/>
    </location>
</feature>
<feature type="region of interest" description="Domain I, interacts with DnaA modulators" evidence="1">
    <location>
        <begin position="1"/>
        <end position="95"/>
    </location>
</feature>
<feature type="region of interest" description="Domain II" evidence="1">
    <location>
        <begin position="96"/>
        <end position="141"/>
    </location>
</feature>
<feature type="region of interest" description="Domain III, AAA+ region" evidence="1">
    <location>
        <begin position="142"/>
        <end position="358"/>
    </location>
</feature>
<feature type="region of interest" description="Domain IV, binds dsDNA" evidence="1">
    <location>
        <begin position="359"/>
        <end position="478"/>
    </location>
</feature>
<feature type="binding site" evidence="1">
    <location>
        <position position="186"/>
    </location>
    <ligand>
        <name>ATP</name>
        <dbReference type="ChEBI" id="CHEBI:30616"/>
    </ligand>
</feature>
<feature type="binding site" evidence="1">
    <location>
        <position position="188"/>
    </location>
    <ligand>
        <name>ATP</name>
        <dbReference type="ChEBI" id="CHEBI:30616"/>
    </ligand>
</feature>
<feature type="binding site" evidence="1">
    <location>
        <position position="189"/>
    </location>
    <ligand>
        <name>ATP</name>
        <dbReference type="ChEBI" id="CHEBI:30616"/>
    </ligand>
</feature>
<feature type="binding site" evidence="1">
    <location>
        <position position="190"/>
    </location>
    <ligand>
        <name>ATP</name>
        <dbReference type="ChEBI" id="CHEBI:30616"/>
    </ligand>
</feature>
<organism>
    <name type="scientific">Tropheryma whipplei (strain Twist)</name>
    <name type="common">Whipple's bacillus</name>
    <dbReference type="NCBI Taxonomy" id="203267"/>
    <lineage>
        <taxon>Bacteria</taxon>
        <taxon>Bacillati</taxon>
        <taxon>Actinomycetota</taxon>
        <taxon>Actinomycetes</taxon>
        <taxon>Micrococcales</taxon>
        <taxon>Tropherymataceae</taxon>
        <taxon>Tropheryma</taxon>
    </lineage>
</organism>
<name>DNAA_TROWT</name>
<protein>
    <recommendedName>
        <fullName evidence="1">Chromosomal replication initiator protein DnaA</fullName>
    </recommendedName>
</protein>